<protein>
    <recommendedName>
        <fullName>Uncharacterized protein DR_2053</fullName>
    </recommendedName>
</protein>
<name>Y2053_DEIRA</name>
<feature type="chain" id="PRO_0000155191" description="Uncharacterized protein DR_2053">
    <location>
        <begin position="1"/>
        <end position="274"/>
    </location>
</feature>
<gene>
    <name type="ordered locus">DR_2053</name>
</gene>
<accession>Q9RSS1</accession>
<evidence type="ECO:0000305" key="1"/>
<reference key="1">
    <citation type="journal article" date="1999" name="Science">
        <title>Genome sequence of the radioresistant bacterium Deinococcus radiodurans R1.</title>
        <authorList>
            <person name="White O."/>
            <person name="Eisen J.A."/>
            <person name="Heidelberg J.F."/>
            <person name="Hickey E.K."/>
            <person name="Peterson J.D."/>
            <person name="Dodson R.J."/>
            <person name="Haft D.H."/>
            <person name="Gwinn M.L."/>
            <person name="Nelson W.C."/>
            <person name="Richardson D.L."/>
            <person name="Moffat K.S."/>
            <person name="Qin H."/>
            <person name="Jiang L."/>
            <person name="Pamphile W."/>
            <person name="Crosby M."/>
            <person name="Shen M."/>
            <person name="Vamathevan J.J."/>
            <person name="Lam P."/>
            <person name="McDonald L.A."/>
            <person name="Utterback T.R."/>
            <person name="Zalewski C."/>
            <person name="Makarova K.S."/>
            <person name="Aravind L."/>
            <person name="Daly M.J."/>
            <person name="Minton K.W."/>
            <person name="Fleischmann R.D."/>
            <person name="Ketchum K.A."/>
            <person name="Nelson K.E."/>
            <person name="Salzberg S.L."/>
            <person name="Smith H.O."/>
            <person name="Venter J.C."/>
            <person name="Fraser C.M."/>
        </authorList>
    </citation>
    <scope>NUCLEOTIDE SEQUENCE [LARGE SCALE GENOMIC DNA]</scope>
    <source>
        <strain>ATCC 13939 / DSM 20539 / JCM 16871 / CCUG 27074 / LMG 4051 / NBRC 15346 / NCIMB 9279 / VKM B-1422 / R1</strain>
    </source>
</reference>
<proteinExistence type="inferred from homology"/>
<sequence length="274" mass="30790">MSDRVGRPRVIRAPRFFCSLRPPALYPERVSLPGPDPFITATRNTDTMPEQSASVSPALSQPPAQAQVTGRFLRMLSIILELLAAVREADERAEFGGLTARARVLEAETNALEREIEDACLVAFAAGLSERELAFYLMVFRSLANLERVGDYAFSVARDLETYAPRARSSTLQDLLPLIRLLSEMVERLAYAFAERDLTAARDVMRLDFEQVDALYEQMQRASLTRLIERPEDNEVALTAGRMARNLERLGDHLVNVAERLETLMLHDQRAGLL</sequence>
<keyword id="KW-1185">Reference proteome</keyword>
<dbReference type="EMBL" id="AE000513">
    <property type="protein sequence ID" value="AAF11603.1"/>
    <property type="molecule type" value="Genomic_DNA"/>
</dbReference>
<dbReference type="PIR" id="H75321">
    <property type="entry name" value="H75321"/>
</dbReference>
<dbReference type="RefSeq" id="NP_295776.1">
    <property type="nucleotide sequence ID" value="NC_001263.1"/>
</dbReference>
<dbReference type="SMR" id="Q9RSS1"/>
<dbReference type="STRING" id="243230.DR_2053"/>
<dbReference type="PaxDb" id="243230-DR_2053"/>
<dbReference type="EnsemblBacteria" id="AAF11603">
    <property type="protein sequence ID" value="AAF11603"/>
    <property type="gene ID" value="DR_2053"/>
</dbReference>
<dbReference type="KEGG" id="dra:DR_2053"/>
<dbReference type="PATRIC" id="fig|243230.17.peg.2280"/>
<dbReference type="eggNOG" id="COG0704">
    <property type="taxonomic scope" value="Bacteria"/>
</dbReference>
<dbReference type="HOGENOM" id="CLU_078518_0_0_0"/>
<dbReference type="InParanoid" id="Q9RSS1"/>
<dbReference type="OrthoDB" id="9814256at2"/>
<dbReference type="Proteomes" id="UP000002524">
    <property type="component" value="Chromosome 1"/>
</dbReference>
<dbReference type="GO" id="GO:0030643">
    <property type="term" value="P:intracellular phosphate ion homeostasis"/>
    <property type="evidence" value="ECO:0007669"/>
    <property type="project" value="InterPro"/>
</dbReference>
<dbReference type="GO" id="GO:0045936">
    <property type="term" value="P:negative regulation of phosphate metabolic process"/>
    <property type="evidence" value="ECO:0007669"/>
    <property type="project" value="InterPro"/>
</dbReference>
<dbReference type="Gene3D" id="1.20.58.220">
    <property type="entry name" value="Phosphate transport system protein phou homolog 2, domain 2"/>
    <property type="match status" value="1"/>
</dbReference>
<dbReference type="InterPro" id="IPR028366">
    <property type="entry name" value="P_transport_PhoU"/>
</dbReference>
<dbReference type="InterPro" id="IPR038078">
    <property type="entry name" value="PhoU-like_sf"/>
</dbReference>
<dbReference type="InterPro" id="IPR026022">
    <property type="entry name" value="PhoU_dom"/>
</dbReference>
<dbReference type="PANTHER" id="PTHR42930">
    <property type="entry name" value="PHOSPHATE-SPECIFIC TRANSPORT SYSTEM ACCESSORY PROTEIN PHOU"/>
    <property type="match status" value="1"/>
</dbReference>
<dbReference type="PANTHER" id="PTHR42930:SF3">
    <property type="entry name" value="PHOSPHATE-SPECIFIC TRANSPORT SYSTEM ACCESSORY PROTEIN PHOU"/>
    <property type="match status" value="1"/>
</dbReference>
<dbReference type="Pfam" id="PF01895">
    <property type="entry name" value="PhoU"/>
    <property type="match status" value="2"/>
</dbReference>
<dbReference type="SUPFAM" id="SSF109755">
    <property type="entry name" value="PhoU-like"/>
    <property type="match status" value="1"/>
</dbReference>
<comment type="similarity">
    <text evidence="1">Belongs to the PhoU family.</text>
</comment>
<organism>
    <name type="scientific">Deinococcus radiodurans (strain ATCC 13939 / DSM 20539 / JCM 16871 / CCUG 27074 / LMG 4051 / NBRC 15346 / NCIMB 9279 / VKM B-1422 / R1)</name>
    <dbReference type="NCBI Taxonomy" id="243230"/>
    <lineage>
        <taxon>Bacteria</taxon>
        <taxon>Thermotogati</taxon>
        <taxon>Deinococcota</taxon>
        <taxon>Deinococci</taxon>
        <taxon>Deinococcales</taxon>
        <taxon>Deinococcaceae</taxon>
        <taxon>Deinococcus</taxon>
    </lineage>
</organism>